<accession>Q5BMD4</accession>
<accession>Q5PQM5</accession>
<evidence type="ECO:0000250" key="1"/>
<evidence type="ECO:0000256" key="2">
    <source>
        <dbReference type="SAM" id="MobiDB-lite"/>
    </source>
</evidence>
<evidence type="ECO:0000305" key="3"/>
<sequence length="205" mass="22776">MRSRLLLPVPHLPTIRETSEELSHGAPGQEPPASPSLDDYVRCICQLAQPTSVLDKATAWSPPNRSCRPAWPREKRHQSESLEDSSPCFSSLQPTLPAPGTDNPLDWLFGKSQEQQTDRRDLPNRTGSSGHWGVHRQMGKDSGRPSEARVPEYSLGRKPGHRHQTSNLKSWTSRKPCQALASVSSSRPSSILGTLYLHLPVIHEL</sequence>
<dbReference type="EMBL" id="AY931022">
    <property type="protein sequence ID" value="AAX31278.1"/>
    <property type="molecule type" value="mRNA"/>
</dbReference>
<dbReference type="EMBL" id="BC087112">
    <property type="protein sequence ID" value="AAH87112.1"/>
    <property type="molecule type" value="mRNA"/>
</dbReference>
<dbReference type="RefSeq" id="NP_001019505.2">
    <property type="nucleotide sequence ID" value="NM_001024334.2"/>
</dbReference>
<dbReference type="RefSeq" id="XP_006237258.1">
    <property type="nucleotide sequence ID" value="XM_006237196.3"/>
</dbReference>
<dbReference type="RefSeq" id="XP_006237259.1">
    <property type="nucleotide sequence ID" value="XM_006237197.3"/>
</dbReference>
<dbReference type="SMR" id="Q5BMD4"/>
<dbReference type="FunCoup" id="Q5BMD4">
    <property type="interactions" value="26"/>
</dbReference>
<dbReference type="STRING" id="10116.ENSRNOP00000018133"/>
<dbReference type="PhosphoSitePlus" id="Q5BMD4"/>
<dbReference type="PaxDb" id="10116-ENSRNOP00000018133"/>
<dbReference type="GeneID" id="500300"/>
<dbReference type="KEGG" id="rno:500300"/>
<dbReference type="UCSC" id="RGD:1565700">
    <property type="organism name" value="rat"/>
</dbReference>
<dbReference type="AGR" id="RGD:1565700"/>
<dbReference type="CTD" id="11067"/>
<dbReference type="RGD" id="1565700">
    <property type="gene designation" value="LOC500300"/>
</dbReference>
<dbReference type="eggNOG" id="ENOG502T1TA">
    <property type="taxonomic scope" value="Eukaryota"/>
</dbReference>
<dbReference type="InParanoid" id="Q5BMD4"/>
<dbReference type="OrthoDB" id="8916819at2759"/>
<dbReference type="PhylomeDB" id="Q5BMD4"/>
<dbReference type="PRO" id="PR:Q5BMD4"/>
<dbReference type="Proteomes" id="UP000002494">
    <property type="component" value="Unplaced"/>
</dbReference>
<dbReference type="GO" id="GO:0005737">
    <property type="term" value="C:cytoplasm"/>
    <property type="evidence" value="ECO:0000266"/>
    <property type="project" value="RGD"/>
</dbReference>
<dbReference type="GO" id="GO:0005739">
    <property type="term" value="C:mitochondrion"/>
    <property type="evidence" value="ECO:0000318"/>
    <property type="project" value="GO_Central"/>
</dbReference>
<dbReference type="GO" id="GO:0005777">
    <property type="term" value="C:peroxisome"/>
    <property type="evidence" value="ECO:0000266"/>
    <property type="project" value="RGD"/>
</dbReference>
<dbReference type="GO" id="GO:0010506">
    <property type="term" value="P:regulation of autophagy"/>
    <property type="evidence" value="ECO:0000266"/>
    <property type="project" value="RGD"/>
</dbReference>
<dbReference type="InterPro" id="IPR020133">
    <property type="entry name" value="DEPP"/>
</dbReference>
<dbReference type="PANTHER" id="PTHR15426">
    <property type="entry name" value="PROTEIN DEPP1"/>
    <property type="match status" value="1"/>
</dbReference>
<dbReference type="PANTHER" id="PTHR15426:SF6">
    <property type="entry name" value="PROTEIN DEPP1"/>
    <property type="match status" value="1"/>
</dbReference>
<dbReference type="Pfam" id="PF15343">
    <property type="entry name" value="DEPP"/>
    <property type="match status" value="1"/>
</dbReference>
<keyword id="KW-0963">Cytoplasm</keyword>
<keyword id="KW-1185">Reference proteome</keyword>
<protein>
    <recommendedName>
        <fullName>Protein DEPP</fullName>
    </recommendedName>
</protein>
<name>DEPP_RAT</name>
<organism>
    <name type="scientific">Rattus norvegicus</name>
    <name type="common">Rat</name>
    <dbReference type="NCBI Taxonomy" id="10116"/>
    <lineage>
        <taxon>Eukaryota</taxon>
        <taxon>Metazoa</taxon>
        <taxon>Chordata</taxon>
        <taxon>Craniata</taxon>
        <taxon>Vertebrata</taxon>
        <taxon>Euteleostomi</taxon>
        <taxon>Mammalia</taxon>
        <taxon>Eutheria</taxon>
        <taxon>Euarchontoglires</taxon>
        <taxon>Glires</taxon>
        <taxon>Rodentia</taxon>
        <taxon>Myomorpha</taxon>
        <taxon>Muroidea</taxon>
        <taxon>Muridae</taxon>
        <taxon>Murinae</taxon>
        <taxon>Rattus</taxon>
    </lineage>
</organism>
<proteinExistence type="evidence at transcript level"/>
<feature type="chain" id="PRO_0000079870" description="Protein DEPP">
    <location>
        <begin position="1"/>
        <end position="205"/>
    </location>
</feature>
<feature type="region of interest" description="Disordered" evidence="2">
    <location>
        <begin position="56"/>
        <end position="173"/>
    </location>
</feature>
<feature type="compositionally biased region" description="Basic and acidic residues" evidence="2">
    <location>
        <begin position="71"/>
        <end position="80"/>
    </location>
</feature>
<feature type="compositionally biased region" description="Basic and acidic residues" evidence="2">
    <location>
        <begin position="138"/>
        <end position="150"/>
    </location>
</feature>
<feature type="sequence conflict" description="In Ref. 2; AAH87112." evidence="3" ref="2">
    <original>L</original>
    <variation>V</variation>
    <location>
        <position position="54"/>
    </location>
</feature>
<gene>
    <name type="primary">Depp</name>
</gene>
<reference key="1">
    <citation type="submission" date="2005-02" db="EMBL/GenBank/DDBJ databases">
        <title>Rattus norvegicus sequence similar to human DEPP.</title>
        <authorList>
            <person name="Bongrazio M."/>
            <person name="Zakrzewicz A."/>
            <person name="Pries A.R."/>
        </authorList>
    </citation>
    <scope>NUCLEOTIDE SEQUENCE [MRNA]</scope>
    <source>
        <tissue>Lung</tissue>
    </source>
</reference>
<reference key="2">
    <citation type="journal article" date="2004" name="Genome Res.">
        <title>The status, quality, and expansion of the NIH full-length cDNA project: the Mammalian Gene Collection (MGC).</title>
        <authorList>
            <consortium name="The MGC Project Team"/>
        </authorList>
    </citation>
    <scope>NUCLEOTIDE SEQUENCE [LARGE SCALE MRNA]</scope>
    <source>
        <tissue>Heart</tissue>
    </source>
</reference>
<comment type="function">
    <text evidence="1">May play a role in autophagy.</text>
</comment>
<comment type="subcellular location">
    <subcellularLocation>
        <location evidence="1">Cytoplasm</location>
    </subcellularLocation>
    <text evidence="1">May localize to aggresomes.</text>
</comment>